<keyword id="KW-0029">Amino-acid transport</keyword>
<keyword id="KW-0067">ATP-binding</keyword>
<keyword id="KW-1003">Cell membrane</keyword>
<keyword id="KW-0472">Membrane</keyword>
<keyword id="KW-0547">Nucleotide-binding</keyword>
<keyword id="KW-1185">Reference proteome</keyword>
<keyword id="KW-1278">Translocase</keyword>
<keyword id="KW-0813">Transport</keyword>
<accession>O34677</accession>
<accession>Q798R2</accession>
<comment type="function">
    <text evidence="1">Part of the ABC transporter complex GlnHMPQ involved in glutamine transport. Probably responsible for energy coupling to the transport system (By similarity).</text>
</comment>
<comment type="subunit">
    <text evidence="4">The complex is composed of two ATP-binding proteins (GlnQ), two transmembrane proteins (GlnM and GlnP) and a solute-binding protein (GlnH).</text>
</comment>
<comment type="subcellular location">
    <subcellularLocation>
        <location evidence="4">Cell membrane</location>
        <topology evidence="4">Peripheral membrane protein</topology>
    </subcellularLocation>
</comment>
<comment type="induction">
    <text evidence="3">Positively regulated by TnrA under nitrogen-limited conditions.</text>
</comment>
<comment type="similarity">
    <text evidence="4">Belongs to the ABC transporter superfamily.</text>
</comment>
<dbReference type="EC" id="7.4.2.-"/>
<dbReference type="EMBL" id="Z69371">
    <property type="protein sequence ID" value="CAA93317.1"/>
    <property type="molecule type" value="Genomic_DNA"/>
</dbReference>
<dbReference type="EMBL" id="AL009126">
    <property type="protein sequence ID" value="CAB14684.1"/>
    <property type="molecule type" value="Genomic_DNA"/>
</dbReference>
<dbReference type="PIR" id="G69633">
    <property type="entry name" value="G69633"/>
</dbReference>
<dbReference type="RefSeq" id="NP_390620.1">
    <property type="nucleotide sequence ID" value="NC_000964.3"/>
</dbReference>
<dbReference type="RefSeq" id="WP_003246180.1">
    <property type="nucleotide sequence ID" value="NZ_OZ025638.1"/>
</dbReference>
<dbReference type="SMR" id="O34677"/>
<dbReference type="FunCoup" id="O34677">
    <property type="interactions" value="586"/>
</dbReference>
<dbReference type="STRING" id="224308.BSU27430"/>
<dbReference type="PaxDb" id="224308-BSU27430"/>
<dbReference type="EnsemblBacteria" id="CAB14684">
    <property type="protein sequence ID" value="CAB14684"/>
    <property type="gene ID" value="BSU_27430"/>
</dbReference>
<dbReference type="GeneID" id="937558"/>
<dbReference type="KEGG" id="bsu:BSU27430"/>
<dbReference type="PATRIC" id="fig|224308.179.peg.2979"/>
<dbReference type="eggNOG" id="COG1126">
    <property type="taxonomic scope" value="Bacteria"/>
</dbReference>
<dbReference type="InParanoid" id="O34677"/>
<dbReference type="OrthoDB" id="9802185at2"/>
<dbReference type="PhylomeDB" id="O34677"/>
<dbReference type="BioCyc" id="BSUB:BSU27430-MONOMER"/>
<dbReference type="Proteomes" id="UP000001570">
    <property type="component" value="Chromosome"/>
</dbReference>
<dbReference type="GO" id="GO:0005886">
    <property type="term" value="C:plasma membrane"/>
    <property type="evidence" value="ECO:0007669"/>
    <property type="project" value="UniProtKB-SubCell"/>
</dbReference>
<dbReference type="GO" id="GO:0015424">
    <property type="term" value="F:ABC-type amino acid transporter activity"/>
    <property type="evidence" value="ECO:0007669"/>
    <property type="project" value="InterPro"/>
</dbReference>
<dbReference type="GO" id="GO:0005524">
    <property type="term" value="F:ATP binding"/>
    <property type="evidence" value="ECO:0007669"/>
    <property type="project" value="UniProtKB-KW"/>
</dbReference>
<dbReference type="GO" id="GO:0016887">
    <property type="term" value="F:ATP hydrolysis activity"/>
    <property type="evidence" value="ECO:0007669"/>
    <property type="project" value="InterPro"/>
</dbReference>
<dbReference type="CDD" id="cd03262">
    <property type="entry name" value="ABC_HisP_GlnQ"/>
    <property type="match status" value="1"/>
</dbReference>
<dbReference type="FunFam" id="3.40.50.300:FF:000020">
    <property type="entry name" value="Amino acid ABC transporter ATP-binding component"/>
    <property type="match status" value="1"/>
</dbReference>
<dbReference type="Gene3D" id="3.40.50.300">
    <property type="entry name" value="P-loop containing nucleotide triphosphate hydrolases"/>
    <property type="match status" value="1"/>
</dbReference>
<dbReference type="InterPro" id="IPR003593">
    <property type="entry name" value="AAA+_ATPase"/>
</dbReference>
<dbReference type="InterPro" id="IPR030679">
    <property type="entry name" value="ABC_ATPase_HisP-typ"/>
</dbReference>
<dbReference type="InterPro" id="IPR003439">
    <property type="entry name" value="ABC_transporter-like_ATP-bd"/>
</dbReference>
<dbReference type="InterPro" id="IPR017871">
    <property type="entry name" value="ABC_transporter-like_CS"/>
</dbReference>
<dbReference type="InterPro" id="IPR050086">
    <property type="entry name" value="MetN_ABC_transporter-like"/>
</dbReference>
<dbReference type="InterPro" id="IPR027417">
    <property type="entry name" value="P-loop_NTPase"/>
</dbReference>
<dbReference type="PANTHER" id="PTHR43166">
    <property type="entry name" value="AMINO ACID IMPORT ATP-BINDING PROTEIN"/>
    <property type="match status" value="1"/>
</dbReference>
<dbReference type="PANTHER" id="PTHR43166:SF4">
    <property type="entry name" value="PHOSPHONATES IMPORT ATP-BINDING PROTEIN PHNC"/>
    <property type="match status" value="1"/>
</dbReference>
<dbReference type="Pfam" id="PF00005">
    <property type="entry name" value="ABC_tran"/>
    <property type="match status" value="1"/>
</dbReference>
<dbReference type="PIRSF" id="PIRSF039085">
    <property type="entry name" value="ABC_ATPase_HisP"/>
    <property type="match status" value="1"/>
</dbReference>
<dbReference type="SMART" id="SM00382">
    <property type="entry name" value="AAA"/>
    <property type="match status" value="1"/>
</dbReference>
<dbReference type="SUPFAM" id="SSF52540">
    <property type="entry name" value="P-loop containing nucleoside triphosphate hydrolases"/>
    <property type="match status" value="1"/>
</dbReference>
<dbReference type="PROSITE" id="PS00211">
    <property type="entry name" value="ABC_TRANSPORTER_1"/>
    <property type="match status" value="1"/>
</dbReference>
<dbReference type="PROSITE" id="PS50893">
    <property type="entry name" value="ABC_TRANSPORTER_2"/>
    <property type="match status" value="1"/>
</dbReference>
<feature type="chain" id="PRO_0000376832" description="Glutamine transport ATP-binding protein GlnQ">
    <location>
        <begin position="1"/>
        <end position="242"/>
    </location>
</feature>
<feature type="domain" description="ABC transporter" evidence="2">
    <location>
        <begin position="2"/>
        <end position="236"/>
    </location>
</feature>
<feature type="binding site" evidence="2">
    <location>
        <begin position="34"/>
        <end position="41"/>
    </location>
    <ligand>
        <name>ATP</name>
        <dbReference type="ChEBI" id="CHEBI:30616"/>
    </ligand>
</feature>
<protein>
    <recommendedName>
        <fullName>Glutamine transport ATP-binding protein GlnQ</fullName>
        <ecNumber>7.4.2.-</ecNumber>
    </recommendedName>
</protein>
<evidence type="ECO:0000250" key="1"/>
<evidence type="ECO:0000255" key="2">
    <source>
        <dbReference type="PROSITE-ProRule" id="PRU00434"/>
    </source>
</evidence>
<evidence type="ECO:0000269" key="3">
    <source>
    </source>
</evidence>
<evidence type="ECO:0000305" key="4"/>
<proteinExistence type="evidence at transcript level"/>
<sequence>MITFQNVNKHYGDFHVLKQINLQIEKGEVVVIIGPSGSGKSTLLRCINRLESINEGVLTVNGTAINDRKTDINQVRQNIGMVFQHFHLYPHKTVLQNIMLAPVKVLRQSPEQAKETARYYLEKVGIPDKADAYPSQLSGGQQQRVAIARGLAMKPEVMLFDEPTSALDPEMIGEVLDVMKTLAKEGMTMVVVTHEMGFAKEVADRIVFIDEGKILEEAVPAEFYANPKEERARLFLSRILNH</sequence>
<gene>
    <name type="primary">glnQ</name>
    <name type="ordered locus">BSU27430</name>
</gene>
<reference key="1">
    <citation type="journal article" date="1995" name="Microbiology">
        <title>An operon encoding a novel ABC-type transport system in Bacillus subtilis.</title>
        <authorList>
            <person name="Rodriguez F."/>
            <person name="Grandi G."/>
        </authorList>
    </citation>
    <scope>NUCLEOTIDE SEQUENCE [GENOMIC DNA]</scope>
    <source>
        <strain>168</strain>
    </source>
</reference>
<reference key="2">
    <citation type="journal article" date="1997" name="Nature">
        <title>The complete genome sequence of the Gram-positive bacterium Bacillus subtilis.</title>
        <authorList>
            <person name="Kunst F."/>
            <person name="Ogasawara N."/>
            <person name="Moszer I."/>
            <person name="Albertini A.M."/>
            <person name="Alloni G."/>
            <person name="Azevedo V."/>
            <person name="Bertero M.G."/>
            <person name="Bessieres P."/>
            <person name="Bolotin A."/>
            <person name="Borchert S."/>
            <person name="Borriss R."/>
            <person name="Boursier L."/>
            <person name="Brans A."/>
            <person name="Braun M."/>
            <person name="Brignell S.C."/>
            <person name="Bron S."/>
            <person name="Brouillet S."/>
            <person name="Bruschi C.V."/>
            <person name="Caldwell B."/>
            <person name="Capuano V."/>
            <person name="Carter N.M."/>
            <person name="Choi S.-K."/>
            <person name="Codani J.-J."/>
            <person name="Connerton I.F."/>
            <person name="Cummings N.J."/>
            <person name="Daniel R.A."/>
            <person name="Denizot F."/>
            <person name="Devine K.M."/>
            <person name="Duesterhoeft A."/>
            <person name="Ehrlich S.D."/>
            <person name="Emmerson P.T."/>
            <person name="Entian K.-D."/>
            <person name="Errington J."/>
            <person name="Fabret C."/>
            <person name="Ferrari E."/>
            <person name="Foulger D."/>
            <person name="Fritz C."/>
            <person name="Fujita M."/>
            <person name="Fujita Y."/>
            <person name="Fuma S."/>
            <person name="Galizzi A."/>
            <person name="Galleron N."/>
            <person name="Ghim S.-Y."/>
            <person name="Glaser P."/>
            <person name="Goffeau A."/>
            <person name="Golightly E.J."/>
            <person name="Grandi G."/>
            <person name="Guiseppi G."/>
            <person name="Guy B.J."/>
            <person name="Haga K."/>
            <person name="Haiech J."/>
            <person name="Harwood C.R."/>
            <person name="Henaut A."/>
            <person name="Hilbert H."/>
            <person name="Holsappel S."/>
            <person name="Hosono S."/>
            <person name="Hullo M.-F."/>
            <person name="Itaya M."/>
            <person name="Jones L.-M."/>
            <person name="Joris B."/>
            <person name="Karamata D."/>
            <person name="Kasahara Y."/>
            <person name="Klaerr-Blanchard M."/>
            <person name="Klein C."/>
            <person name="Kobayashi Y."/>
            <person name="Koetter P."/>
            <person name="Koningstein G."/>
            <person name="Krogh S."/>
            <person name="Kumano M."/>
            <person name="Kurita K."/>
            <person name="Lapidus A."/>
            <person name="Lardinois S."/>
            <person name="Lauber J."/>
            <person name="Lazarevic V."/>
            <person name="Lee S.-M."/>
            <person name="Levine A."/>
            <person name="Liu H."/>
            <person name="Masuda S."/>
            <person name="Mauel C."/>
            <person name="Medigue C."/>
            <person name="Medina N."/>
            <person name="Mellado R.P."/>
            <person name="Mizuno M."/>
            <person name="Moestl D."/>
            <person name="Nakai S."/>
            <person name="Noback M."/>
            <person name="Noone D."/>
            <person name="O'Reilly M."/>
            <person name="Ogawa K."/>
            <person name="Ogiwara A."/>
            <person name="Oudega B."/>
            <person name="Park S.-H."/>
            <person name="Parro V."/>
            <person name="Pohl T.M."/>
            <person name="Portetelle D."/>
            <person name="Porwollik S."/>
            <person name="Prescott A.M."/>
            <person name="Presecan E."/>
            <person name="Pujic P."/>
            <person name="Purnelle B."/>
            <person name="Rapoport G."/>
            <person name="Rey M."/>
            <person name="Reynolds S."/>
            <person name="Rieger M."/>
            <person name="Rivolta C."/>
            <person name="Rocha E."/>
            <person name="Roche B."/>
            <person name="Rose M."/>
            <person name="Sadaie Y."/>
            <person name="Sato T."/>
            <person name="Scanlan E."/>
            <person name="Schleich S."/>
            <person name="Schroeter R."/>
            <person name="Scoffone F."/>
            <person name="Sekiguchi J."/>
            <person name="Sekowska A."/>
            <person name="Seror S.J."/>
            <person name="Serror P."/>
            <person name="Shin B.-S."/>
            <person name="Soldo B."/>
            <person name="Sorokin A."/>
            <person name="Tacconi E."/>
            <person name="Takagi T."/>
            <person name="Takahashi H."/>
            <person name="Takemaru K."/>
            <person name="Takeuchi M."/>
            <person name="Tamakoshi A."/>
            <person name="Tanaka T."/>
            <person name="Terpstra P."/>
            <person name="Tognoni A."/>
            <person name="Tosato V."/>
            <person name="Uchiyama S."/>
            <person name="Vandenbol M."/>
            <person name="Vannier F."/>
            <person name="Vassarotti A."/>
            <person name="Viari A."/>
            <person name="Wambutt R."/>
            <person name="Wedler E."/>
            <person name="Wedler H."/>
            <person name="Weitzenegger T."/>
            <person name="Winters P."/>
            <person name="Wipat A."/>
            <person name="Yamamoto H."/>
            <person name="Yamane K."/>
            <person name="Yasumoto K."/>
            <person name="Yata K."/>
            <person name="Yoshida K."/>
            <person name="Yoshikawa H.-F."/>
            <person name="Zumstein E."/>
            <person name="Yoshikawa H."/>
            <person name="Danchin A."/>
        </authorList>
    </citation>
    <scope>NUCLEOTIDE SEQUENCE [LARGE SCALE GENOMIC DNA]</scope>
    <source>
        <strain>168</strain>
    </source>
</reference>
<reference key="3">
    <citation type="journal article" date="2003" name="Mol. Microbiol.">
        <title>Identification of additional TnrA-regulated genes of Bacillus subtilis associated with a TnrA box.</title>
        <authorList>
            <person name="Yoshida K."/>
            <person name="Yamaguchi H."/>
            <person name="Kinehara M."/>
            <person name="Ohki Y.-H."/>
            <person name="Nakaura Y."/>
            <person name="Fujita Y."/>
        </authorList>
    </citation>
    <scope>INDUCTION BY TNRA</scope>
</reference>
<organism>
    <name type="scientific">Bacillus subtilis (strain 168)</name>
    <dbReference type="NCBI Taxonomy" id="224308"/>
    <lineage>
        <taxon>Bacteria</taxon>
        <taxon>Bacillati</taxon>
        <taxon>Bacillota</taxon>
        <taxon>Bacilli</taxon>
        <taxon>Bacillales</taxon>
        <taxon>Bacillaceae</taxon>
        <taxon>Bacillus</taxon>
    </lineage>
</organism>
<name>GLNQ_BACSU</name>